<dbReference type="EC" id="1.14.-.-"/>
<dbReference type="EMBL" id="M19352">
    <property type="protein sequence ID" value="AAA82503.1"/>
    <property type="molecule type" value="Genomic_DNA"/>
</dbReference>
<dbReference type="PIR" id="B32306">
    <property type="entry name" value="B32306"/>
</dbReference>
<dbReference type="RefSeq" id="NP_059795.1">
    <property type="nucleotide sequence ID" value="NC_002377.1"/>
</dbReference>
<dbReference type="SMR" id="P24467"/>
<dbReference type="GO" id="GO:0020037">
    <property type="term" value="F:heme binding"/>
    <property type="evidence" value="ECO:0007669"/>
    <property type="project" value="InterPro"/>
</dbReference>
<dbReference type="GO" id="GO:0005506">
    <property type="term" value="F:iron ion binding"/>
    <property type="evidence" value="ECO:0007669"/>
    <property type="project" value="InterPro"/>
</dbReference>
<dbReference type="GO" id="GO:0004497">
    <property type="term" value="F:monooxygenase activity"/>
    <property type="evidence" value="ECO:0007669"/>
    <property type="project" value="UniProtKB-KW"/>
</dbReference>
<dbReference type="GO" id="GO:0016705">
    <property type="term" value="F:oxidoreductase activity, acting on paired donors, with incorporation or reduction of molecular oxygen"/>
    <property type="evidence" value="ECO:0007669"/>
    <property type="project" value="InterPro"/>
</dbReference>
<dbReference type="CDD" id="cd11039">
    <property type="entry name" value="P450-pinF2-like"/>
    <property type="match status" value="1"/>
</dbReference>
<dbReference type="Gene3D" id="1.10.630.10">
    <property type="entry name" value="Cytochrome P450"/>
    <property type="match status" value="1"/>
</dbReference>
<dbReference type="InterPro" id="IPR001128">
    <property type="entry name" value="Cyt_P450"/>
</dbReference>
<dbReference type="InterPro" id="IPR002397">
    <property type="entry name" value="Cyt_P450_B"/>
</dbReference>
<dbReference type="InterPro" id="IPR017972">
    <property type="entry name" value="Cyt_P450_CS"/>
</dbReference>
<dbReference type="InterPro" id="IPR036396">
    <property type="entry name" value="Cyt_P450_sf"/>
</dbReference>
<dbReference type="PANTHER" id="PTHR46696:SF1">
    <property type="entry name" value="CYTOCHROME P450 YJIB-RELATED"/>
    <property type="match status" value="1"/>
</dbReference>
<dbReference type="PANTHER" id="PTHR46696">
    <property type="entry name" value="P450, PUTATIVE (EUROFUNG)-RELATED"/>
    <property type="match status" value="1"/>
</dbReference>
<dbReference type="Pfam" id="PF00067">
    <property type="entry name" value="p450"/>
    <property type="match status" value="1"/>
</dbReference>
<dbReference type="PRINTS" id="PR00359">
    <property type="entry name" value="BP450"/>
</dbReference>
<dbReference type="SUPFAM" id="SSF48264">
    <property type="entry name" value="Cytochrome P450"/>
    <property type="match status" value="1"/>
</dbReference>
<dbReference type="PROSITE" id="PS00086">
    <property type="entry name" value="CYTOCHROME_P450"/>
    <property type="match status" value="1"/>
</dbReference>
<comment type="function">
    <text>Not essential for virulence, but may be involved in the detoxification of plant protective agents at the site of wounding.</text>
</comment>
<comment type="cofactor">
    <cofactor evidence="1">
        <name>heme</name>
        <dbReference type="ChEBI" id="CHEBI:30413"/>
    </cofactor>
</comment>
<comment type="induction">
    <text>Transcriptionally activated in the presence of wounded plant tissue and by plant phenolic compounds, such as acetosyringone.</text>
</comment>
<comment type="similarity">
    <text evidence="2">Belongs to the cytochrome P450 family.</text>
</comment>
<protein>
    <recommendedName>
        <fullName>Cytochrome P450-pinF2, plant-inducible</fullName>
        <ecNumber>1.14.-.-</ecNumber>
    </recommendedName>
</protein>
<geneLocation type="plasmid">
    <name>pTiA6</name>
</geneLocation>
<proteinExistence type="evidence at transcript level"/>
<reference key="1">
    <citation type="journal article" date="1989" name="J. Bacteriol.">
        <title>Nucleotide sequence and analysis of the plant-inducible locus pinF from Agrobacterium tumefaciens.</title>
        <authorList>
            <person name="Kanemoto R.H."/>
            <person name="Powell A.T."/>
            <person name="Akiyoshi D.E."/>
            <person name="Regier D.A."/>
            <person name="Kerstetter R.A."/>
            <person name="Nester E.W."/>
            <person name="Hawes M.C."/>
            <person name="Gordon M.P."/>
        </authorList>
    </citation>
    <scope>NUCLEOTIDE SEQUENCE [GENOMIC DNA]</scope>
</reference>
<keyword id="KW-0349">Heme</keyword>
<keyword id="KW-0408">Iron</keyword>
<keyword id="KW-0479">Metal-binding</keyword>
<keyword id="KW-0503">Monooxygenase</keyword>
<keyword id="KW-0560">Oxidoreductase</keyword>
<keyword id="KW-0614">Plasmid</keyword>
<accession>P24467</accession>
<organism>
    <name type="scientific">Rhizobium radiobacter</name>
    <name type="common">Agrobacterium tumefaciens</name>
    <name type="synonym">Agrobacterium radiobacter</name>
    <dbReference type="NCBI Taxonomy" id="358"/>
    <lineage>
        <taxon>Bacteria</taxon>
        <taxon>Pseudomonadati</taxon>
        <taxon>Pseudomonadota</taxon>
        <taxon>Alphaproteobacteria</taxon>
        <taxon>Hyphomicrobiales</taxon>
        <taxon>Rhizobiaceae</taxon>
        <taxon>Rhizobium/Agrobacterium group</taxon>
        <taxon>Agrobacterium</taxon>
        <taxon>Agrobacterium tumefaciens complex</taxon>
    </lineage>
</organism>
<gene>
    <name type="primary">cyp104</name>
    <name type="synonym">pinF2</name>
    <name type="synonym">virH2</name>
</gene>
<feature type="chain" id="PRO_0000052212" description="Cytochrome P450-pinF2, plant-inducible">
    <location>
        <begin position="1"/>
        <end position="407"/>
    </location>
</feature>
<feature type="binding site" description="axial binding residue" evidence="1">
    <location>
        <position position="356"/>
    </location>
    <ligand>
        <name>heme</name>
        <dbReference type="ChEBI" id="CHEBI:30413"/>
    </ligand>
    <ligandPart>
        <name>Fe</name>
        <dbReference type="ChEBI" id="CHEBI:18248"/>
    </ligandPart>
</feature>
<evidence type="ECO:0000250" key="1"/>
<evidence type="ECO:0000305" key="2"/>
<sequence length="407" mass="45879">MEERRVSISSITWRFPMLFAPVDDVTTIDDLTLDPYPIYRRMRVQNPVVHVASVRRTFLTKAFDTKMVKDDPSRFSSDDPSTPMKPAFQAHTLMRKDGTEHARERMAMARAFAPKAIADHWAPIYRDIVNEYLDRLPRGDTVDLFAEICGPVAARILAHILGICEASDVEIIRWSQRLIDGAGNFGWRSELFERSDEANAEMNCLFNDLVKKHRSAPNPSAFATMLNAPDPIPLSQIYANIKIAIGGGVNEPRDALGTILYGLLTNPEQLEEVKRQQCWGQAFEEGLRWVAPIQASSRLVREDTEIRGFIVPKGDIVMTIQASANRDEDVFEDGESFNVFRPKSAHQSFGSGPHHCPGAQISRQTVGAIMLPILFDRFPDMILPHPELVQWRGFGFRGPINLPVTLR</sequence>
<name>CPXD_RHIRD</name>